<name>PDRG1_HUMAN</name>
<feature type="chain" id="PRO_0000058277" description="p53 and DNA damage-regulated protein 1">
    <location>
        <begin position="1"/>
        <end position="133"/>
    </location>
</feature>
<proteinExistence type="evidence at protein level"/>
<protein>
    <recommendedName>
        <fullName>p53 and DNA damage-regulated protein 1</fullName>
    </recommendedName>
</protein>
<sequence length="133" mass="15511">MLSPEAERVLRYLVEVEELAEEVLADKRQIVDLDTKRNQNREGLRALQKDLSLSEDVMVCFGNMFIKMPHPETKEMIEKDQDHLDKEIEKLRKQLKVKVNRLFEAQGKPELKGFNLNPLNQDELKALKVILKG</sequence>
<comment type="function">
    <text evidence="3">May play a role in chaperone-mediated protein folding.</text>
</comment>
<comment type="subunit">
    <text evidence="2">Component of the PAQosome complex which is responsible for the biogenesis of several protein complexes and which consists of R2TP complex members RUVBL1, RUVBL2, RPAP3 and PIH1D1, URI complex members PFDN2, PFDN6, PDRG1, UXT and URI1 as well as ASDURF, POLR2E and DNAAF10/WDR92.</text>
</comment>
<comment type="interaction">
    <interactant intactId="EBI-307050">
        <id>Q9NUG6</id>
    </interactant>
    <interactant intactId="EBI-742887">
        <id>Q8TAP6</id>
        <label>CEP76</label>
    </interactant>
    <organismsDiffer>false</organismsDiffer>
    <experiments>3</experiments>
</comment>
<comment type="interaction">
    <interactant intactId="EBI-307050">
        <id>Q9NUG6</id>
    </interactant>
    <interactant intactId="EBI-359873">
        <id>Q9UHV9</id>
        <label>PFDN2</label>
    </interactant>
    <organismsDiffer>false</organismsDiffer>
    <experiments>4</experiments>
</comment>
<comment type="subcellular location">
    <subcellularLocation>
        <location evidence="3">Cytoplasm</location>
    </subcellularLocation>
</comment>
<comment type="tissue specificity">
    <text evidence="1">Predominantly expressed in normal testis and exhibits reduced but detectable expression in other organs.</text>
</comment>
<comment type="induction">
    <text evidence="1">By UV irradiation and repressed by p53/TP53.</text>
</comment>
<comment type="similarity">
    <text evidence="3">Belongs to the prefoldin subunit beta family.</text>
</comment>
<gene>
    <name type="primary">PDRG1</name>
    <name type="synonym">C20orf126</name>
    <name type="synonym">PDRG</name>
</gene>
<evidence type="ECO:0000269" key="1">
    <source>
    </source>
</evidence>
<evidence type="ECO:0000269" key="2">
    <source>
    </source>
</evidence>
<evidence type="ECO:0000305" key="3"/>
<keyword id="KW-0143">Chaperone</keyword>
<keyword id="KW-0963">Cytoplasm</keyword>
<keyword id="KW-1267">Proteomics identification</keyword>
<keyword id="KW-1185">Reference proteome</keyword>
<organism>
    <name type="scientific">Homo sapiens</name>
    <name type="common">Human</name>
    <dbReference type="NCBI Taxonomy" id="9606"/>
    <lineage>
        <taxon>Eukaryota</taxon>
        <taxon>Metazoa</taxon>
        <taxon>Chordata</taxon>
        <taxon>Craniata</taxon>
        <taxon>Vertebrata</taxon>
        <taxon>Euteleostomi</taxon>
        <taxon>Mammalia</taxon>
        <taxon>Eutheria</taxon>
        <taxon>Euarchontoglires</taxon>
        <taxon>Primates</taxon>
        <taxon>Haplorrhini</taxon>
        <taxon>Catarrhini</taxon>
        <taxon>Hominidae</taxon>
        <taxon>Homo</taxon>
    </lineage>
</organism>
<dbReference type="EMBL" id="AY286301">
    <property type="protein sequence ID" value="AAP45329.1"/>
    <property type="molecule type" value="mRNA"/>
</dbReference>
<dbReference type="EMBL" id="AK312021">
    <property type="protein sequence ID" value="BAG34958.1"/>
    <property type="molecule type" value="mRNA"/>
</dbReference>
<dbReference type="EMBL" id="AL031658">
    <property type="status" value="NOT_ANNOTATED_CDS"/>
    <property type="molecule type" value="Genomic_DNA"/>
</dbReference>
<dbReference type="EMBL" id="CH471077">
    <property type="protein sequence ID" value="EAW76399.1"/>
    <property type="molecule type" value="Genomic_DNA"/>
</dbReference>
<dbReference type="EMBL" id="BC001856">
    <property type="protein sequence ID" value="AAH01856.2"/>
    <property type="molecule type" value="mRNA"/>
</dbReference>
<dbReference type="EMBL" id="BC009334">
    <property type="protein sequence ID" value="AAH09334.1"/>
    <property type="molecule type" value="mRNA"/>
</dbReference>
<dbReference type="CCDS" id="CCDS13194.1"/>
<dbReference type="RefSeq" id="NP_110442.1">
    <property type="nucleotide sequence ID" value="NM_030815.3"/>
</dbReference>
<dbReference type="SMR" id="Q9NUG6"/>
<dbReference type="BioGRID" id="123533">
    <property type="interactions" value="126"/>
</dbReference>
<dbReference type="ComplexPortal" id="CPX-25767">
    <property type="entry name" value="Prefoldin co-chaperone complex"/>
</dbReference>
<dbReference type="ComplexPortal" id="CPX-6144">
    <property type="entry name" value="Prefoldin co-chaperone complex, URI1 variant"/>
</dbReference>
<dbReference type="CORUM" id="Q9NUG6"/>
<dbReference type="DIP" id="DIP-27568N"/>
<dbReference type="FunCoup" id="Q9NUG6">
    <property type="interactions" value="69"/>
</dbReference>
<dbReference type="IntAct" id="Q9NUG6">
    <property type="interactions" value="65"/>
</dbReference>
<dbReference type="MINT" id="Q9NUG6"/>
<dbReference type="STRING" id="9606.ENSP00000202017"/>
<dbReference type="GlyGen" id="Q9NUG6">
    <property type="glycosylation" value="1 site, 1 O-linked glycan (1 site)"/>
</dbReference>
<dbReference type="iPTMnet" id="Q9NUG6"/>
<dbReference type="PhosphoSitePlus" id="Q9NUG6"/>
<dbReference type="SwissPalm" id="Q9NUG6"/>
<dbReference type="BioMuta" id="PDRG1"/>
<dbReference type="DMDM" id="24211602"/>
<dbReference type="jPOST" id="Q9NUG6"/>
<dbReference type="MassIVE" id="Q9NUG6"/>
<dbReference type="PaxDb" id="9606-ENSP00000202017"/>
<dbReference type="PeptideAtlas" id="Q9NUG6"/>
<dbReference type="ProteomicsDB" id="82671"/>
<dbReference type="Pumba" id="Q9NUG6"/>
<dbReference type="TopDownProteomics" id="Q9NUG6"/>
<dbReference type="Antibodypedia" id="25293">
    <property type="antibodies" value="207 antibodies from 26 providers"/>
</dbReference>
<dbReference type="DNASU" id="81572"/>
<dbReference type="Ensembl" id="ENST00000202017.6">
    <property type="protein sequence ID" value="ENSP00000202017.4"/>
    <property type="gene ID" value="ENSG00000088356.6"/>
</dbReference>
<dbReference type="GeneID" id="81572"/>
<dbReference type="KEGG" id="hsa:81572"/>
<dbReference type="MANE-Select" id="ENST00000202017.6">
    <property type="protein sequence ID" value="ENSP00000202017.4"/>
    <property type="RefSeq nucleotide sequence ID" value="NM_030815.3"/>
    <property type="RefSeq protein sequence ID" value="NP_110442.1"/>
</dbReference>
<dbReference type="UCSC" id="uc002wxd.4">
    <property type="organism name" value="human"/>
</dbReference>
<dbReference type="AGR" id="HGNC:16119"/>
<dbReference type="CTD" id="81572"/>
<dbReference type="DisGeNET" id="81572"/>
<dbReference type="GeneCards" id="PDRG1"/>
<dbReference type="HGNC" id="HGNC:16119">
    <property type="gene designation" value="PDRG1"/>
</dbReference>
<dbReference type="HPA" id="ENSG00000088356">
    <property type="expression patterns" value="Low tissue specificity"/>
</dbReference>
<dbReference type="MIM" id="610789">
    <property type="type" value="gene"/>
</dbReference>
<dbReference type="neXtProt" id="NX_Q9NUG6"/>
<dbReference type="OpenTargets" id="ENSG00000088356"/>
<dbReference type="PharmGKB" id="PA25667"/>
<dbReference type="VEuPathDB" id="HostDB:ENSG00000088356"/>
<dbReference type="eggNOG" id="ENOG502S6V9">
    <property type="taxonomic scope" value="Eukaryota"/>
</dbReference>
<dbReference type="GeneTree" id="ENSGT00390000013253"/>
<dbReference type="HOGENOM" id="CLU_132161_0_0_1"/>
<dbReference type="InParanoid" id="Q9NUG6"/>
<dbReference type="OMA" id="DEKAMVC"/>
<dbReference type="OrthoDB" id="20282at2759"/>
<dbReference type="PAN-GO" id="Q9NUG6">
    <property type="GO annotations" value="0 GO annotations based on evolutionary models"/>
</dbReference>
<dbReference type="PhylomeDB" id="Q9NUG6"/>
<dbReference type="TreeFam" id="TF329240"/>
<dbReference type="PathwayCommons" id="Q9NUG6"/>
<dbReference type="SignaLink" id="Q9NUG6"/>
<dbReference type="SIGNOR" id="Q9NUG6"/>
<dbReference type="BioGRID-ORCS" id="81572">
    <property type="hits" value="775 hits in 1161 CRISPR screens"/>
</dbReference>
<dbReference type="GenomeRNAi" id="81572"/>
<dbReference type="Pharos" id="Q9NUG6">
    <property type="development level" value="Tbio"/>
</dbReference>
<dbReference type="PRO" id="PR:Q9NUG6"/>
<dbReference type="Proteomes" id="UP000005640">
    <property type="component" value="Chromosome 20"/>
</dbReference>
<dbReference type="RNAct" id="Q9NUG6">
    <property type="molecule type" value="protein"/>
</dbReference>
<dbReference type="Bgee" id="ENSG00000088356">
    <property type="expression patterns" value="Expressed in pancreatic ductal cell and 187 other cell types or tissues"/>
</dbReference>
<dbReference type="ExpressionAtlas" id="Q9NUG6">
    <property type="expression patterns" value="baseline and differential"/>
</dbReference>
<dbReference type="GO" id="GO:0005737">
    <property type="term" value="C:cytoplasm"/>
    <property type="evidence" value="ECO:0007669"/>
    <property type="project" value="UniProtKB-SubCell"/>
</dbReference>
<dbReference type="GO" id="GO:0016272">
    <property type="term" value="C:prefoldin complex"/>
    <property type="evidence" value="ECO:0007669"/>
    <property type="project" value="InterPro"/>
</dbReference>
<dbReference type="GO" id="GO:0101031">
    <property type="term" value="C:protein folding chaperone complex"/>
    <property type="evidence" value="ECO:0000303"/>
    <property type="project" value="ComplexPortal"/>
</dbReference>
<dbReference type="GO" id="GO:1990062">
    <property type="term" value="C:RPAP3/R2TP/prefoldin-like complex"/>
    <property type="evidence" value="ECO:0000353"/>
    <property type="project" value="ComplexPortal"/>
</dbReference>
<dbReference type="GO" id="GO:0051082">
    <property type="term" value="F:unfolded protein binding"/>
    <property type="evidence" value="ECO:0007669"/>
    <property type="project" value="InterPro"/>
</dbReference>
<dbReference type="GO" id="GO:0006457">
    <property type="term" value="P:protein folding"/>
    <property type="evidence" value="ECO:0007669"/>
    <property type="project" value="InterPro"/>
</dbReference>
<dbReference type="GO" id="GO:0050821">
    <property type="term" value="P:protein stabilization"/>
    <property type="evidence" value="ECO:0000303"/>
    <property type="project" value="ComplexPortal"/>
</dbReference>
<dbReference type="CDD" id="cd22860">
    <property type="entry name" value="PDRG1"/>
    <property type="match status" value="1"/>
</dbReference>
<dbReference type="InterPro" id="IPR030482">
    <property type="entry name" value="PDRG1"/>
</dbReference>
<dbReference type="InterPro" id="IPR002777">
    <property type="entry name" value="PFD_beta-like"/>
</dbReference>
<dbReference type="PANTHER" id="PTHR21162">
    <property type="entry name" value="P53 AND DNA DAMAGE-REGULATED PROTEIN"/>
    <property type="match status" value="1"/>
</dbReference>
<dbReference type="PANTHER" id="PTHR21162:SF0">
    <property type="entry name" value="P53 AND DNA DAMAGE-REGULATED PROTEIN 1"/>
    <property type="match status" value="1"/>
</dbReference>
<dbReference type="Pfam" id="PF01920">
    <property type="entry name" value="Prefoldin_2"/>
    <property type="match status" value="1"/>
</dbReference>
<dbReference type="SUPFAM" id="SSF46579">
    <property type="entry name" value="Prefoldin"/>
    <property type="match status" value="1"/>
</dbReference>
<accession>Q9NUG6</accession>
<accession>B2R511</accession>
<accession>Q96GP3</accession>
<accession>Q9BUW8</accession>
<reference key="1">
    <citation type="journal article" date="2003" name="Oncogene">
        <title>Cloning and characterization of a novel gene PDRG that is differentially regulated by p53 and ultraviolet radiation.</title>
        <authorList>
            <person name="Luo X."/>
            <person name="Huang Y."/>
            <person name="Sheikh M.S."/>
        </authorList>
    </citation>
    <scope>NUCLEOTIDE SEQUENCE [MRNA]</scope>
    <scope>TISSUE SPECIFICITY</scope>
    <scope>INDUCTION</scope>
</reference>
<reference key="2">
    <citation type="journal article" date="2004" name="Nat. Genet.">
        <title>Complete sequencing and characterization of 21,243 full-length human cDNAs.</title>
        <authorList>
            <person name="Ota T."/>
            <person name="Suzuki Y."/>
            <person name="Nishikawa T."/>
            <person name="Otsuki T."/>
            <person name="Sugiyama T."/>
            <person name="Irie R."/>
            <person name="Wakamatsu A."/>
            <person name="Hayashi K."/>
            <person name="Sato H."/>
            <person name="Nagai K."/>
            <person name="Kimura K."/>
            <person name="Makita H."/>
            <person name="Sekine M."/>
            <person name="Obayashi M."/>
            <person name="Nishi T."/>
            <person name="Shibahara T."/>
            <person name="Tanaka T."/>
            <person name="Ishii S."/>
            <person name="Yamamoto J."/>
            <person name="Saito K."/>
            <person name="Kawai Y."/>
            <person name="Isono Y."/>
            <person name="Nakamura Y."/>
            <person name="Nagahari K."/>
            <person name="Murakami K."/>
            <person name="Yasuda T."/>
            <person name="Iwayanagi T."/>
            <person name="Wagatsuma M."/>
            <person name="Shiratori A."/>
            <person name="Sudo H."/>
            <person name="Hosoiri T."/>
            <person name="Kaku Y."/>
            <person name="Kodaira H."/>
            <person name="Kondo H."/>
            <person name="Sugawara M."/>
            <person name="Takahashi M."/>
            <person name="Kanda K."/>
            <person name="Yokoi T."/>
            <person name="Furuya T."/>
            <person name="Kikkawa E."/>
            <person name="Omura Y."/>
            <person name="Abe K."/>
            <person name="Kamihara K."/>
            <person name="Katsuta N."/>
            <person name="Sato K."/>
            <person name="Tanikawa M."/>
            <person name="Yamazaki M."/>
            <person name="Ninomiya K."/>
            <person name="Ishibashi T."/>
            <person name="Yamashita H."/>
            <person name="Murakawa K."/>
            <person name="Fujimori K."/>
            <person name="Tanai H."/>
            <person name="Kimata M."/>
            <person name="Watanabe M."/>
            <person name="Hiraoka S."/>
            <person name="Chiba Y."/>
            <person name="Ishida S."/>
            <person name="Ono Y."/>
            <person name="Takiguchi S."/>
            <person name="Watanabe S."/>
            <person name="Yosida M."/>
            <person name="Hotuta T."/>
            <person name="Kusano J."/>
            <person name="Kanehori K."/>
            <person name="Takahashi-Fujii A."/>
            <person name="Hara H."/>
            <person name="Tanase T.-O."/>
            <person name="Nomura Y."/>
            <person name="Togiya S."/>
            <person name="Komai F."/>
            <person name="Hara R."/>
            <person name="Takeuchi K."/>
            <person name="Arita M."/>
            <person name="Imose N."/>
            <person name="Musashino K."/>
            <person name="Yuuki H."/>
            <person name="Oshima A."/>
            <person name="Sasaki N."/>
            <person name="Aotsuka S."/>
            <person name="Yoshikawa Y."/>
            <person name="Matsunawa H."/>
            <person name="Ichihara T."/>
            <person name="Shiohata N."/>
            <person name="Sano S."/>
            <person name="Moriya S."/>
            <person name="Momiyama H."/>
            <person name="Satoh N."/>
            <person name="Takami S."/>
            <person name="Terashima Y."/>
            <person name="Suzuki O."/>
            <person name="Nakagawa S."/>
            <person name="Senoh A."/>
            <person name="Mizoguchi H."/>
            <person name="Goto Y."/>
            <person name="Shimizu F."/>
            <person name="Wakebe H."/>
            <person name="Hishigaki H."/>
            <person name="Watanabe T."/>
            <person name="Sugiyama A."/>
            <person name="Takemoto M."/>
            <person name="Kawakami B."/>
            <person name="Yamazaki M."/>
            <person name="Watanabe K."/>
            <person name="Kumagai A."/>
            <person name="Itakura S."/>
            <person name="Fukuzumi Y."/>
            <person name="Fujimori Y."/>
            <person name="Komiyama M."/>
            <person name="Tashiro H."/>
            <person name="Tanigami A."/>
            <person name="Fujiwara T."/>
            <person name="Ono T."/>
            <person name="Yamada K."/>
            <person name="Fujii Y."/>
            <person name="Ozaki K."/>
            <person name="Hirao M."/>
            <person name="Ohmori Y."/>
            <person name="Kawabata A."/>
            <person name="Hikiji T."/>
            <person name="Kobatake N."/>
            <person name="Inagaki H."/>
            <person name="Ikema Y."/>
            <person name="Okamoto S."/>
            <person name="Okitani R."/>
            <person name="Kawakami T."/>
            <person name="Noguchi S."/>
            <person name="Itoh T."/>
            <person name="Shigeta K."/>
            <person name="Senba T."/>
            <person name="Matsumura K."/>
            <person name="Nakajima Y."/>
            <person name="Mizuno T."/>
            <person name="Morinaga M."/>
            <person name="Sasaki M."/>
            <person name="Togashi T."/>
            <person name="Oyama M."/>
            <person name="Hata H."/>
            <person name="Watanabe M."/>
            <person name="Komatsu T."/>
            <person name="Mizushima-Sugano J."/>
            <person name="Satoh T."/>
            <person name="Shirai Y."/>
            <person name="Takahashi Y."/>
            <person name="Nakagawa K."/>
            <person name="Okumura K."/>
            <person name="Nagase T."/>
            <person name="Nomura N."/>
            <person name="Kikuchi H."/>
            <person name="Masuho Y."/>
            <person name="Yamashita R."/>
            <person name="Nakai K."/>
            <person name="Yada T."/>
            <person name="Nakamura Y."/>
            <person name="Ohara O."/>
            <person name="Isogai T."/>
            <person name="Sugano S."/>
        </authorList>
    </citation>
    <scope>NUCLEOTIDE SEQUENCE [LARGE SCALE MRNA]</scope>
    <source>
        <tissue>Thymus</tissue>
    </source>
</reference>
<reference key="3">
    <citation type="journal article" date="2001" name="Nature">
        <title>The DNA sequence and comparative analysis of human chromosome 20.</title>
        <authorList>
            <person name="Deloukas P."/>
            <person name="Matthews L.H."/>
            <person name="Ashurst J.L."/>
            <person name="Burton J."/>
            <person name="Gilbert J.G.R."/>
            <person name="Jones M."/>
            <person name="Stavrides G."/>
            <person name="Almeida J.P."/>
            <person name="Babbage A.K."/>
            <person name="Bagguley C.L."/>
            <person name="Bailey J."/>
            <person name="Barlow K.F."/>
            <person name="Bates K.N."/>
            <person name="Beard L.M."/>
            <person name="Beare D.M."/>
            <person name="Beasley O.P."/>
            <person name="Bird C.P."/>
            <person name="Blakey S.E."/>
            <person name="Bridgeman A.M."/>
            <person name="Brown A.J."/>
            <person name="Buck D."/>
            <person name="Burrill W.D."/>
            <person name="Butler A.P."/>
            <person name="Carder C."/>
            <person name="Carter N.P."/>
            <person name="Chapman J.C."/>
            <person name="Clamp M."/>
            <person name="Clark G."/>
            <person name="Clark L.N."/>
            <person name="Clark S.Y."/>
            <person name="Clee C.M."/>
            <person name="Clegg S."/>
            <person name="Cobley V.E."/>
            <person name="Collier R.E."/>
            <person name="Connor R.E."/>
            <person name="Corby N.R."/>
            <person name="Coulson A."/>
            <person name="Coville G.J."/>
            <person name="Deadman R."/>
            <person name="Dhami P.D."/>
            <person name="Dunn M."/>
            <person name="Ellington A.G."/>
            <person name="Frankland J.A."/>
            <person name="Fraser A."/>
            <person name="French L."/>
            <person name="Garner P."/>
            <person name="Grafham D.V."/>
            <person name="Griffiths C."/>
            <person name="Griffiths M.N.D."/>
            <person name="Gwilliam R."/>
            <person name="Hall R.E."/>
            <person name="Hammond S."/>
            <person name="Harley J.L."/>
            <person name="Heath P.D."/>
            <person name="Ho S."/>
            <person name="Holden J.L."/>
            <person name="Howden P.J."/>
            <person name="Huckle E."/>
            <person name="Hunt A.R."/>
            <person name="Hunt S.E."/>
            <person name="Jekosch K."/>
            <person name="Johnson C.M."/>
            <person name="Johnson D."/>
            <person name="Kay M.P."/>
            <person name="Kimberley A.M."/>
            <person name="King A."/>
            <person name="Knights A."/>
            <person name="Laird G.K."/>
            <person name="Lawlor S."/>
            <person name="Lehvaeslaiho M.H."/>
            <person name="Leversha M.A."/>
            <person name="Lloyd C."/>
            <person name="Lloyd D.M."/>
            <person name="Lovell J.D."/>
            <person name="Marsh V.L."/>
            <person name="Martin S.L."/>
            <person name="McConnachie L.J."/>
            <person name="McLay K."/>
            <person name="McMurray A.A."/>
            <person name="Milne S.A."/>
            <person name="Mistry D."/>
            <person name="Moore M.J.F."/>
            <person name="Mullikin J.C."/>
            <person name="Nickerson T."/>
            <person name="Oliver K."/>
            <person name="Parker A."/>
            <person name="Patel R."/>
            <person name="Pearce T.A.V."/>
            <person name="Peck A.I."/>
            <person name="Phillimore B.J.C.T."/>
            <person name="Prathalingam S.R."/>
            <person name="Plumb R.W."/>
            <person name="Ramsay H."/>
            <person name="Rice C.M."/>
            <person name="Ross M.T."/>
            <person name="Scott C.E."/>
            <person name="Sehra H.K."/>
            <person name="Shownkeen R."/>
            <person name="Sims S."/>
            <person name="Skuce C.D."/>
            <person name="Smith M.L."/>
            <person name="Soderlund C."/>
            <person name="Steward C.A."/>
            <person name="Sulston J.E."/>
            <person name="Swann R.M."/>
            <person name="Sycamore N."/>
            <person name="Taylor R."/>
            <person name="Tee L."/>
            <person name="Thomas D.W."/>
            <person name="Thorpe A."/>
            <person name="Tracey A."/>
            <person name="Tromans A.C."/>
            <person name="Vaudin M."/>
            <person name="Wall M."/>
            <person name="Wallis J.M."/>
            <person name="Whitehead S.L."/>
            <person name="Whittaker P."/>
            <person name="Willey D.L."/>
            <person name="Williams L."/>
            <person name="Williams S.A."/>
            <person name="Wilming L."/>
            <person name="Wray P.W."/>
            <person name="Hubbard T."/>
            <person name="Durbin R.M."/>
            <person name="Bentley D.R."/>
            <person name="Beck S."/>
            <person name="Rogers J."/>
        </authorList>
    </citation>
    <scope>NUCLEOTIDE SEQUENCE [LARGE SCALE GENOMIC DNA]</scope>
</reference>
<reference key="4">
    <citation type="submission" date="2005-09" db="EMBL/GenBank/DDBJ databases">
        <authorList>
            <person name="Mural R.J."/>
            <person name="Istrail S."/>
            <person name="Sutton G.G."/>
            <person name="Florea L."/>
            <person name="Halpern A.L."/>
            <person name="Mobarry C.M."/>
            <person name="Lippert R."/>
            <person name="Walenz B."/>
            <person name="Shatkay H."/>
            <person name="Dew I."/>
            <person name="Miller J.R."/>
            <person name="Flanigan M.J."/>
            <person name="Edwards N.J."/>
            <person name="Bolanos R."/>
            <person name="Fasulo D."/>
            <person name="Halldorsson B.V."/>
            <person name="Hannenhalli S."/>
            <person name="Turner R."/>
            <person name="Yooseph S."/>
            <person name="Lu F."/>
            <person name="Nusskern D.R."/>
            <person name="Shue B.C."/>
            <person name="Zheng X.H."/>
            <person name="Zhong F."/>
            <person name="Delcher A.L."/>
            <person name="Huson D.H."/>
            <person name="Kravitz S.A."/>
            <person name="Mouchard L."/>
            <person name="Reinert K."/>
            <person name="Remington K.A."/>
            <person name="Clark A.G."/>
            <person name="Waterman M.S."/>
            <person name="Eichler E.E."/>
            <person name="Adams M.D."/>
            <person name="Hunkapiller M.W."/>
            <person name="Myers E.W."/>
            <person name="Venter J.C."/>
        </authorList>
    </citation>
    <scope>NUCLEOTIDE SEQUENCE [LARGE SCALE GENOMIC DNA]</scope>
</reference>
<reference key="5">
    <citation type="journal article" date="2004" name="Genome Res.">
        <title>The status, quality, and expansion of the NIH full-length cDNA project: the Mammalian Gene Collection (MGC).</title>
        <authorList>
            <consortium name="The MGC Project Team"/>
        </authorList>
    </citation>
    <scope>NUCLEOTIDE SEQUENCE [LARGE SCALE MRNA]</scope>
    <source>
        <tissue>Brain</tissue>
        <tissue>Muscle</tissue>
    </source>
</reference>
<reference key="6">
    <citation type="journal article" date="2012" name="Proc. Natl. Acad. Sci. U.S.A.">
        <title>N-terminal acetylome analyses and functional insights of the N-terminal acetyltransferase NatB.</title>
        <authorList>
            <person name="Van Damme P."/>
            <person name="Lasa M."/>
            <person name="Polevoda B."/>
            <person name="Gazquez C."/>
            <person name="Elosegui-Artola A."/>
            <person name="Kim D.S."/>
            <person name="De Juan-Pardo E."/>
            <person name="Demeyer K."/>
            <person name="Hole K."/>
            <person name="Larrea E."/>
            <person name="Timmerman E."/>
            <person name="Prieto J."/>
            <person name="Arnesen T."/>
            <person name="Sherman F."/>
            <person name="Gevaert K."/>
            <person name="Aldabe R."/>
        </authorList>
    </citation>
    <scope>IDENTIFICATION BY MASS SPECTROMETRY [LARGE SCALE ANALYSIS]</scope>
</reference>
<reference key="7">
    <citation type="journal article" date="2020" name="J. Proteome Res.">
        <title>Upstream ORF-Encoded ASDURF Is a Novel Prefoldin-like Subunit of the PAQosome.</title>
        <authorList>
            <person name="Cloutier P."/>
            <person name="Poitras C."/>
            <person name="Faubert D."/>
            <person name="Bouchard A."/>
            <person name="Blanchette M."/>
            <person name="Gauthier M.S."/>
            <person name="Coulombe B."/>
        </authorList>
    </citation>
    <scope>IDENTIFICATION IN THE PAQOSOME COMPLEX</scope>
    <scope>IDENTIFICATION BY MASS SPECTROMETRY</scope>
</reference>